<gene>
    <name evidence="1" type="primary">astD</name>
    <name type="ordered locus">Swoo_0657</name>
</gene>
<dbReference type="EC" id="1.2.1.71" evidence="1"/>
<dbReference type="EMBL" id="CP000961">
    <property type="protein sequence ID" value="ACA84953.1"/>
    <property type="molecule type" value="Genomic_DNA"/>
</dbReference>
<dbReference type="RefSeq" id="WP_012323300.1">
    <property type="nucleotide sequence ID" value="NC_010506.1"/>
</dbReference>
<dbReference type="SMR" id="B1KDF2"/>
<dbReference type="STRING" id="392500.Swoo_0657"/>
<dbReference type="KEGG" id="swd:Swoo_0657"/>
<dbReference type="eggNOG" id="COG1012">
    <property type="taxonomic scope" value="Bacteria"/>
</dbReference>
<dbReference type="HOGENOM" id="CLU_005391_1_0_6"/>
<dbReference type="UniPathway" id="UPA00185">
    <property type="reaction ID" value="UER00282"/>
</dbReference>
<dbReference type="Proteomes" id="UP000002168">
    <property type="component" value="Chromosome"/>
</dbReference>
<dbReference type="GO" id="GO:0043824">
    <property type="term" value="F:succinylglutamate-semialdehyde dehydrogenase activity"/>
    <property type="evidence" value="ECO:0007669"/>
    <property type="project" value="UniProtKB-EC"/>
</dbReference>
<dbReference type="GO" id="GO:0019544">
    <property type="term" value="P:arginine catabolic process to glutamate"/>
    <property type="evidence" value="ECO:0007669"/>
    <property type="project" value="UniProtKB-UniRule"/>
</dbReference>
<dbReference type="GO" id="GO:0019545">
    <property type="term" value="P:arginine catabolic process to succinate"/>
    <property type="evidence" value="ECO:0007669"/>
    <property type="project" value="UniProtKB-UniRule"/>
</dbReference>
<dbReference type="CDD" id="cd07095">
    <property type="entry name" value="ALDH_SGSD_AstD"/>
    <property type="match status" value="1"/>
</dbReference>
<dbReference type="FunFam" id="3.40.309.10:FF:000013">
    <property type="entry name" value="N-succinylglutamate 5-semialdehyde dehydrogenase"/>
    <property type="match status" value="1"/>
</dbReference>
<dbReference type="FunFam" id="3.40.605.10:FF:000010">
    <property type="entry name" value="N-succinylglutamate 5-semialdehyde dehydrogenase"/>
    <property type="match status" value="1"/>
</dbReference>
<dbReference type="Gene3D" id="3.40.605.10">
    <property type="entry name" value="Aldehyde Dehydrogenase, Chain A, domain 1"/>
    <property type="match status" value="1"/>
</dbReference>
<dbReference type="Gene3D" id="3.40.309.10">
    <property type="entry name" value="Aldehyde Dehydrogenase, Chain A, domain 2"/>
    <property type="match status" value="1"/>
</dbReference>
<dbReference type="HAMAP" id="MF_01174">
    <property type="entry name" value="Aldedh_AstD"/>
    <property type="match status" value="1"/>
</dbReference>
<dbReference type="InterPro" id="IPR016161">
    <property type="entry name" value="Ald_DH/histidinol_DH"/>
</dbReference>
<dbReference type="InterPro" id="IPR016163">
    <property type="entry name" value="Ald_DH_C"/>
</dbReference>
<dbReference type="InterPro" id="IPR016160">
    <property type="entry name" value="Ald_DH_CS_CYS"/>
</dbReference>
<dbReference type="InterPro" id="IPR029510">
    <property type="entry name" value="Ald_DH_CS_GLU"/>
</dbReference>
<dbReference type="InterPro" id="IPR016162">
    <property type="entry name" value="Ald_DH_N"/>
</dbReference>
<dbReference type="InterPro" id="IPR015590">
    <property type="entry name" value="Aldehyde_DH_dom"/>
</dbReference>
<dbReference type="InterPro" id="IPR017649">
    <property type="entry name" value="SuccinylGlu_semiald_DH_AstD"/>
</dbReference>
<dbReference type="NCBIfam" id="TIGR03240">
    <property type="entry name" value="arg_catab_astD"/>
    <property type="match status" value="1"/>
</dbReference>
<dbReference type="NCBIfam" id="NF006992">
    <property type="entry name" value="PRK09457.1"/>
    <property type="match status" value="1"/>
</dbReference>
<dbReference type="PANTHER" id="PTHR11699">
    <property type="entry name" value="ALDEHYDE DEHYDROGENASE-RELATED"/>
    <property type="match status" value="1"/>
</dbReference>
<dbReference type="Pfam" id="PF00171">
    <property type="entry name" value="Aldedh"/>
    <property type="match status" value="1"/>
</dbReference>
<dbReference type="SUPFAM" id="SSF53720">
    <property type="entry name" value="ALDH-like"/>
    <property type="match status" value="1"/>
</dbReference>
<dbReference type="PROSITE" id="PS00070">
    <property type="entry name" value="ALDEHYDE_DEHYDR_CYS"/>
    <property type="match status" value="1"/>
</dbReference>
<dbReference type="PROSITE" id="PS00687">
    <property type="entry name" value="ALDEHYDE_DEHYDR_GLU"/>
    <property type="match status" value="1"/>
</dbReference>
<comment type="function">
    <text evidence="1">Catalyzes the NAD-dependent reduction of succinylglutamate semialdehyde into succinylglutamate.</text>
</comment>
<comment type="catalytic activity">
    <reaction evidence="1">
        <text>N-succinyl-L-glutamate 5-semialdehyde + NAD(+) + H2O = N-succinyl-L-glutamate + NADH + 2 H(+)</text>
        <dbReference type="Rhea" id="RHEA:10812"/>
        <dbReference type="ChEBI" id="CHEBI:15377"/>
        <dbReference type="ChEBI" id="CHEBI:15378"/>
        <dbReference type="ChEBI" id="CHEBI:57540"/>
        <dbReference type="ChEBI" id="CHEBI:57945"/>
        <dbReference type="ChEBI" id="CHEBI:58520"/>
        <dbReference type="ChEBI" id="CHEBI:58763"/>
        <dbReference type="EC" id="1.2.1.71"/>
    </reaction>
</comment>
<comment type="pathway">
    <text evidence="1">Amino-acid degradation; L-arginine degradation via AST pathway; L-glutamate and succinate from L-arginine: step 4/5.</text>
</comment>
<comment type="similarity">
    <text evidence="1">Belongs to the aldehyde dehydrogenase family. AstD subfamily.</text>
</comment>
<protein>
    <recommendedName>
        <fullName evidence="1">N-succinylglutamate 5-semialdehyde dehydrogenase</fullName>
        <ecNumber evidence="1">1.2.1.71</ecNumber>
    </recommendedName>
    <alternativeName>
        <fullName evidence="1">Succinylglutamic semialdehyde dehydrogenase</fullName>
        <shortName evidence="1">SGSD</shortName>
    </alternativeName>
</protein>
<proteinExistence type="inferred from homology"/>
<reference key="1">
    <citation type="submission" date="2008-02" db="EMBL/GenBank/DDBJ databases">
        <title>Complete sequence of Shewanella woodyi ATCC 51908.</title>
        <authorList>
            <consortium name="US DOE Joint Genome Institute"/>
            <person name="Copeland A."/>
            <person name="Lucas S."/>
            <person name="Lapidus A."/>
            <person name="Glavina del Rio T."/>
            <person name="Dalin E."/>
            <person name="Tice H."/>
            <person name="Bruce D."/>
            <person name="Goodwin L."/>
            <person name="Pitluck S."/>
            <person name="Sims D."/>
            <person name="Brettin T."/>
            <person name="Detter J.C."/>
            <person name="Han C."/>
            <person name="Kuske C.R."/>
            <person name="Schmutz J."/>
            <person name="Larimer F."/>
            <person name="Land M."/>
            <person name="Hauser L."/>
            <person name="Kyrpides N."/>
            <person name="Lykidis A."/>
            <person name="Zhao J.-S."/>
            <person name="Richardson P."/>
        </authorList>
    </citation>
    <scope>NUCLEOTIDE SEQUENCE [LARGE SCALE GENOMIC DNA]</scope>
    <source>
        <strain>ATCC 51908 / MS32</strain>
    </source>
</reference>
<accession>B1KDF2</accession>
<evidence type="ECO:0000255" key="1">
    <source>
        <dbReference type="HAMAP-Rule" id="MF_01174"/>
    </source>
</evidence>
<keyword id="KW-0056">Arginine metabolism</keyword>
<keyword id="KW-0520">NAD</keyword>
<keyword id="KW-0560">Oxidoreductase</keyword>
<keyword id="KW-1185">Reference proteome</keyword>
<sequence length="486" mass="51858">MTQFINGQWVAGLGHEVTSKNPANSEVIWSSKTATAEQVNTAVEAAREVQFDWFMLGFEGRLAIVEAYKTQLEEHKAEMAEVIAQETGKPQWETATEAGAMIGKIGLSVAAYNKRTGSSENDTPAGRAVLRHKPHGVVAVFGPYNFPGHLPNGHIVPALLAGNTVVFKPSELTPKVAELMLKLWEKAGLPAGVINLVQGEVETGKALASHEQIDGLFFTGSSRTGHILHQQYAGEPGKILALEMGGNNPLIIKGVKDTKAAVHDIIQSAYISSGQRCTCARRLYVEKGAEGDALLAELADAVKRIQVGAWNSQPQPFMGSMISETAAKGMVESQRNLLNLGGSSLVELTHLKEGTGLVSPGLIDVTQVIELPDEEYFGPLLQVVRYTDFDEAIKLANKTRYGLSAGILADSRDDYEYFLARIRAGIVNWNKQITGASGAAPFGGVGASGNHRASAFYAADYCAYPVASVEADAVSLPASLSPGLSI</sequence>
<name>ASTD_SHEWM</name>
<organism>
    <name type="scientific">Shewanella woodyi (strain ATCC 51908 / MS32)</name>
    <dbReference type="NCBI Taxonomy" id="392500"/>
    <lineage>
        <taxon>Bacteria</taxon>
        <taxon>Pseudomonadati</taxon>
        <taxon>Pseudomonadota</taxon>
        <taxon>Gammaproteobacteria</taxon>
        <taxon>Alteromonadales</taxon>
        <taxon>Shewanellaceae</taxon>
        <taxon>Shewanella</taxon>
    </lineage>
</organism>
<feature type="chain" id="PRO_1000138062" description="N-succinylglutamate 5-semialdehyde dehydrogenase">
    <location>
        <begin position="1"/>
        <end position="486"/>
    </location>
</feature>
<feature type="active site" evidence="1">
    <location>
        <position position="243"/>
    </location>
</feature>
<feature type="active site" evidence="1">
    <location>
        <position position="277"/>
    </location>
</feature>
<feature type="binding site" evidence="1">
    <location>
        <begin position="220"/>
        <end position="225"/>
    </location>
    <ligand>
        <name>NAD(+)</name>
        <dbReference type="ChEBI" id="CHEBI:57540"/>
    </ligand>
</feature>